<evidence type="ECO:0000255" key="1">
    <source>
        <dbReference type="HAMAP-Rule" id="MF_01629"/>
    </source>
</evidence>
<organism>
    <name type="scientific">Burkholderia cenocepacia (strain HI2424)</name>
    <dbReference type="NCBI Taxonomy" id="331272"/>
    <lineage>
        <taxon>Bacteria</taxon>
        <taxon>Pseudomonadati</taxon>
        <taxon>Pseudomonadota</taxon>
        <taxon>Betaproteobacteria</taxon>
        <taxon>Burkholderiales</taxon>
        <taxon>Burkholderiaceae</taxon>
        <taxon>Burkholderia</taxon>
        <taxon>Burkholderia cepacia complex</taxon>
    </lineage>
</organism>
<keyword id="KW-0285">Flavoprotein</keyword>
<keyword id="KW-0288">FMN</keyword>
<keyword id="KW-0560">Oxidoreductase</keyword>
<keyword id="KW-0664">Pyridoxine biosynthesis</keyword>
<feature type="chain" id="PRO_0000292289" description="Pyridoxine/pyridoxamine 5'-phosphate oxidase">
    <location>
        <begin position="1"/>
        <end position="214"/>
    </location>
</feature>
<feature type="binding site" evidence="1">
    <location>
        <begin position="8"/>
        <end position="11"/>
    </location>
    <ligand>
        <name>substrate</name>
    </ligand>
</feature>
<feature type="binding site" evidence="1">
    <location>
        <begin position="61"/>
        <end position="66"/>
    </location>
    <ligand>
        <name>FMN</name>
        <dbReference type="ChEBI" id="CHEBI:58210"/>
    </ligand>
</feature>
<feature type="binding site" evidence="1">
    <location>
        <position position="66"/>
    </location>
    <ligand>
        <name>substrate</name>
    </ligand>
</feature>
<feature type="binding site" evidence="1">
    <location>
        <begin position="76"/>
        <end position="77"/>
    </location>
    <ligand>
        <name>FMN</name>
        <dbReference type="ChEBI" id="CHEBI:58210"/>
    </ligand>
</feature>
<feature type="binding site" evidence="1">
    <location>
        <position position="82"/>
    </location>
    <ligand>
        <name>FMN</name>
        <dbReference type="ChEBI" id="CHEBI:58210"/>
    </ligand>
</feature>
<feature type="binding site" evidence="1">
    <location>
        <position position="83"/>
    </location>
    <ligand>
        <name>FMN</name>
        <dbReference type="ChEBI" id="CHEBI:58210"/>
    </ligand>
</feature>
<feature type="binding site" evidence="1">
    <location>
        <position position="105"/>
    </location>
    <ligand>
        <name>FMN</name>
        <dbReference type="ChEBI" id="CHEBI:58210"/>
    </ligand>
</feature>
<feature type="binding site" evidence="1">
    <location>
        <position position="123"/>
    </location>
    <ligand>
        <name>substrate</name>
    </ligand>
</feature>
<feature type="binding site" evidence="1">
    <location>
        <position position="127"/>
    </location>
    <ligand>
        <name>substrate</name>
    </ligand>
</feature>
<feature type="binding site" evidence="1">
    <location>
        <position position="131"/>
    </location>
    <ligand>
        <name>substrate</name>
    </ligand>
</feature>
<feature type="binding site" evidence="1">
    <location>
        <begin position="140"/>
        <end position="141"/>
    </location>
    <ligand>
        <name>FMN</name>
        <dbReference type="ChEBI" id="CHEBI:58210"/>
    </ligand>
</feature>
<feature type="binding site" evidence="1">
    <location>
        <position position="184"/>
    </location>
    <ligand>
        <name>FMN</name>
        <dbReference type="ChEBI" id="CHEBI:58210"/>
    </ligand>
</feature>
<feature type="binding site" evidence="1">
    <location>
        <begin position="190"/>
        <end position="192"/>
    </location>
    <ligand>
        <name>substrate</name>
    </ligand>
</feature>
<feature type="binding site" evidence="1">
    <location>
        <position position="194"/>
    </location>
    <ligand>
        <name>FMN</name>
        <dbReference type="ChEBI" id="CHEBI:58210"/>
    </ligand>
</feature>
<sequence length="214" mass="24121">MTTLADLRINYSRASLDEADAAPDPFAQFDRWFKEALAAKLPEPNTMTLATVGADGRPSARIVLIKGVDERGFVFFTNYESRKGHDLAVHPQAALLFYWIELERQVRIEGRIEKTSAEESDRYFASRPLGSRIGAWASEQSAVIDSRATLEAREKAVSERYGDNPPRPPHWGGYRLVPDSIEFWQGRPSRLHDRLLYTRDAAAASGWTISRLSP</sequence>
<name>PDXH_BURCH</name>
<protein>
    <recommendedName>
        <fullName evidence="1">Pyridoxine/pyridoxamine 5'-phosphate oxidase</fullName>
        <ecNumber evidence="1">1.4.3.5</ecNumber>
    </recommendedName>
    <alternativeName>
        <fullName evidence="1">PNP/PMP oxidase</fullName>
        <shortName evidence="1">PNPOx</shortName>
    </alternativeName>
    <alternativeName>
        <fullName evidence="1">Pyridoxal 5'-phosphate synthase</fullName>
    </alternativeName>
</protein>
<reference key="1">
    <citation type="submission" date="2006-08" db="EMBL/GenBank/DDBJ databases">
        <title>Complete sequence of chromosome 1 of Burkholderia cenocepacia HI2424.</title>
        <authorList>
            <person name="Copeland A."/>
            <person name="Lucas S."/>
            <person name="Lapidus A."/>
            <person name="Barry K."/>
            <person name="Detter J.C."/>
            <person name="Glavina del Rio T."/>
            <person name="Hammon N."/>
            <person name="Israni S."/>
            <person name="Pitluck S."/>
            <person name="Chain P."/>
            <person name="Malfatti S."/>
            <person name="Shin M."/>
            <person name="Vergez L."/>
            <person name="Schmutz J."/>
            <person name="Larimer F."/>
            <person name="Land M."/>
            <person name="Hauser L."/>
            <person name="Kyrpides N."/>
            <person name="Kim E."/>
            <person name="LiPuma J.J."/>
            <person name="Gonzalez C.F."/>
            <person name="Konstantinidis K."/>
            <person name="Tiedje J.M."/>
            <person name="Richardson P."/>
        </authorList>
    </citation>
    <scope>NUCLEOTIDE SEQUENCE [LARGE SCALE GENOMIC DNA]</scope>
    <source>
        <strain>HI2424</strain>
    </source>
</reference>
<accession>A0K9Z1</accession>
<gene>
    <name evidence="1" type="primary">pdxH</name>
    <name type="ordered locus">Bcen2424_2568</name>
</gene>
<comment type="function">
    <text evidence="1">Catalyzes the oxidation of either pyridoxine 5'-phosphate (PNP) or pyridoxamine 5'-phosphate (PMP) into pyridoxal 5'-phosphate (PLP).</text>
</comment>
<comment type="catalytic activity">
    <reaction evidence="1">
        <text>pyridoxamine 5'-phosphate + O2 + H2O = pyridoxal 5'-phosphate + H2O2 + NH4(+)</text>
        <dbReference type="Rhea" id="RHEA:15817"/>
        <dbReference type="ChEBI" id="CHEBI:15377"/>
        <dbReference type="ChEBI" id="CHEBI:15379"/>
        <dbReference type="ChEBI" id="CHEBI:16240"/>
        <dbReference type="ChEBI" id="CHEBI:28938"/>
        <dbReference type="ChEBI" id="CHEBI:58451"/>
        <dbReference type="ChEBI" id="CHEBI:597326"/>
        <dbReference type="EC" id="1.4.3.5"/>
    </reaction>
</comment>
<comment type="catalytic activity">
    <reaction evidence="1">
        <text>pyridoxine 5'-phosphate + O2 = pyridoxal 5'-phosphate + H2O2</text>
        <dbReference type="Rhea" id="RHEA:15149"/>
        <dbReference type="ChEBI" id="CHEBI:15379"/>
        <dbReference type="ChEBI" id="CHEBI:16240"/>
        <dbReference type="ChEBI" id="CHEBI:58589"/>
        <dbReference type="ChEBI" id="CHEBI:597326"/>
        <dbReference type="EC" id="1.4.3.5"/>
    </reaction>
</comment>
<comment type="cofactor">
    <cofactor evidence="1">
        <name>FMN</name>
        <dbReference type="ChEBI" id="CHEBI:58210"/>
    </cofactor>
    <text evidence="1">Binds 1 FMN per subunit.</text>
</comment>
<comment type="pathway">
    <text evidence="1">Cofactor metabolism; pyridoxal 5'-phosphate salvage; pyridoxal 5'-phosphate from pyridoxamine 5'-phosphate: step 1/1.</text>
</comment>
<comment type="pathway">
    <text evidence="1">Cofactor metabolism; pyridoxal 5'-phosphate salvage; pyridoxal 5'-phosphate from pyridoxine 5'-phosphate: step 1/1.</text>
</comment>
<comment type="subunit">
    <text evidence="1">Homodimer.</text>
</comment>
<comment type="similarity">
    <text evidence="1">Belongs to the pyridoxamine 5'-phosphate oxidase family.</text>
</comment>
<dbReference type="EC" id="1.4.3.5" evidence="1"/>
<dbReference type="EMBL" id="CP000458">
    <property type="protein sequence ID" value="ABK09318.1"/>
    <property type="molecule type" value="Genomic_DNA"/>
</dbReference>
<dbReference type="RefSeq" id="WP_011546060.1">
    <property type="nucleotide sequence ID" value="NC_008542.1"/>
</dbReference>
<dbReference type="SMR" id="A0K9Z1"/>
<dbReference type="KEGG" id="bch:Bcen2424_2568"/>
<dbReference type="HOGENOM" id="CLU_032263_2_2_4"/>
<dbReference type="UniPathway" id="UPA01068">
    <property type="reaction ID" value="UER00304"/>
</dbReference>
<dbReference type="UniPathway" id="UPA01068">
    <property type="reaction ID" value="UER00305"/>
</dbReference>
<dbReference type="GO" id="GO:0010181">
    <property type="term" value="F:FMN binding"/>
    <property type="evidence" value="ECO:0007669"/>
    <property type="project" value="UniProtKB-UniRule"/>
</dbReference>
<dbReference type="GO" id="GO:0004733">
    <property type="term" value="F:pyridoxamine phosphate oxidase activity"/>
    <property type="evidence" value="ECO:0007669"/>
    <property type="project" value="UniProtKB-UniRule"/>
</dbReference>
<dbReference type="GO" id="GO:0008615">
    <property type="term" value="P:pyridoxine biosynthetic process"/>
    <property type="evidence" value="ECO:0007669"/>
    <property type="project" value="UniProtKB-KW"/>
</dbReference>
<dbReference type="FunFam" id="2.30.110.10:FF:000005">
    <property type="entry name" value="NAD(P)H-hydrate epimerase"/>
    <property type="match status" value="1"/>
</dbReference>
<dbReference type="Gene3D" id="2.30.110.10">
    <property type="entry name" value="Electron Transport, Fmn-binding Protein, Chain A"/>
    <property type="match status" value="1"/>
</dbReference>
<dbReference type="HAMAP" id="MF_01629">
    <property type="entry name" value="PdxH"/>
    <property type="match status" value="1"/>
</dbReference>
<dbReference type="InterPro" id="IPR000659">
    <property type="entry name" value="Pyridox_Oxase"/>
</dbReference>
<dbReference type="InterPro" id="IPR019740">
    <property type="entry name" value="Pyridox_Oxase_CS"/>
</dbReference>
<dbReference type="InterPro" id="IPR011576">
    <property type="entry name" value="Pyridox_Oxase_N"/>
</dbReference>
<dbReference type="InterPro" id="IPR019576">
    <property type="entry name" value="Pyridoxamine_oxidase_dimer_C"/>
</dbReference>
<dbReference type="InterPro" id="IPR012349">
    <property type="entry name" value="Split_barrel_FMN-bd"/>
</dbReference>
<dbReference type="NCBIfam" id="TIGR00558">
    <property type="entry name" value="pdxH"/>
    <property type="match status" value="1"/>
</dbReference>
<dbReference type="NCBIfam" id="NF004231">
    <property type="entry name" value="PRK05679.1"/>
    <property type="match status" value="1"/>
</dbReference>
<dbReference type="PANTHER" id="PTHR10851:SF0">
    <property type="entry name" value="PYRIDOXINE-5'-PHOSPHATE OXIDASE"/>
    <property type="match status" value="1"/>
</dbReference>
<dbReference type="PANTHER" id="PTHR10851">
    <property type="entry name" value="PYRIDOXINE-5-PHOSPHATE OXIDASE"/>
    <property type="match status" value="1"/>
</dbReference>
<dbReference type="Pfam" id="PF10590">
    <property type="entry name" value="PNP_phzG_C"/>
    <property type="match status" value="1"/>
</dbReference>
<dbReference type="Pfam" id="PF01243">
    <property type="entry name" value="PNPOx_N"/>
    <property type="match status" value="1"/>
</dbReference>
<dbReference type="PIRSF" id="PIRSF000190">
    <property type="entry name" value="Pyd_amn-ph_oxd"/>
    <property type="match status" value="1"/>
</dbReference>
<dbReference type="SUPFAM" id="SSF50475">
    <property type="entry name" value="FMN-binding split barrel"/>
    <property type="match status" value="1"/>
</dbReference>
<dbReference type="PROSITE" id="PS01064">
    <property type="entry name" value="PYRIDOX_OXIDASE"/>
    <property type="match status" value="1"/>
</dbReference>
<proteinExistence type="inferred from homology"/>